<reference key="1">
    <citation type="submission" date="2004-11" db="EMBL/GenBank/DDBJ databases">
        <authorList>
            <consortium name="The German cDNA consortium"/>
        </authorList>
    </citation>
    <scope>NUCLEOTIDE SEQUENCE [LARGE SCALE MRNA]</scope>
    <source>
        <tissue>Brain cortex</tissue>
    </source>
</reference>
<comment type="function">
    <text evidence="1">Involved in tetrahydrobiopterin biosynthesis. Seems to both prevent the formation of 7-pterins and accelerate the formation of quinonoid-BH2 (By similarity).</text>
</comment>
<comment type="function">
    <text evidence="1">Regulates the dimerization of homeodomain protein HNF-1-alpha and enhances its transcriptional activity.</text>
</comment>
<comment type="catalytic activity">
    <reaction>
        <text>(4aS,6R)-4a-hydroxy-L-erythro-5,6,7,8-tetrahydrobiopterin = (6R)-L-erythro-6,7-dihydrobiopterin + H2O</text>
        <dbReference type="Rhea" id="RHEA:11920"/>
        <dbReference type="ChEBI" id="CHEBI:15377"/>
        <dbReference type="ChEBI" id="CHEBI:15642"/>
        <dbReference type="ChEBI" id="CHEBI:43120"/>
        <dbReference type="EC" id="4.2.1.96"/>
    </reaction>
</comment>
<comment type="subunit">
    <text evidence="1">Homotetramer. Interacts with DYRK1B (By similarity).</text>
</comment>
<comment type="similarity">
    <text evidence="3">Belongs to the pterin-4-alpha-carbinolamine dehydratase family.</text>
</comment>
<comment type="sequence caution" evidence="3">
    <conflict type="erroneous initiation">
        <sequence resource="EMBL-CDS" id="CAH92259"/>
    </conflict>
</comment>
<proteinExistence type="evidence at transcript level"/>
<organism>
    <name type="scientific">Pongo abelii</name>
    <name type="common">Sumatran orangutan</name>
    <name type="synonym">Pongo pygmaeus abelii</name>
    <dbReference type="NCBI Taxonomy" id="9601"/>
    <lineage>
        <taxon>Eukaryota</taxon>
        <taxon>Metazoa</taxon>
        <taxon>Chordata</taxon>
        <taxon>Craniata</taxon>
        <taxon>Vertebrata</taxon>
        <taxon>Euteleostomi</taxon>
        <taxon>Mammalia</taxon>
        <taxon>Eutheria</taxon>
        <taxon>Euarchontoglires</taxon>
        <taxon>Primates</taxon>
        <taxon>Haplorrhini</taxon>
        <taxon>Catarrhini</taxon>
        <taxon>Hominidae</taxon>
        <taxon>Pongo</taxon>
    </lineage>
</organism>
<feature type="chain" id="PRO_0000228719" description="Pterin-4-alpha-carbinolamine dehydratase 2">
    <location>
        <begin position="1" status="less than"/>
        <end position="117"/>
    </location>
</feature>
<feature type="modified residue" description="N6-acetyllysine; alternate" evidence="2">
    <location>
        <position position="101"/>
    </location>
</feature>
<feature type="modified residue" description="N6-succinyllysine; alternate" evidence="2">
    <location>
        <position position="101"/>
    </location>
</feature>
<feature type="modified residue" description="N6-acetyllysine; alternate" evidence="2">
    <location>
        <position position="105"/>
    </location>
</feature>
<feature type="modified residue" description="N6-succinyllysine; alternate" evidence="2">
    <location>
        <position position="105"/>
    </location>
</feature>
<feature type="modified residue" description="N6-acetyllysine; alternate" evidence="2">
    <location>
        <position position="112"/>
    </location>
</feature>
<feature type="modified residue" description="N6-succinyllysine; alternate" evidence="2">
    <location>
        <position position="112"/>
    </location>
</feature>
<feature type="non-terminal residue">
    <location>
        <position position="1"/>
    </location>
</feature>
<gene>
    <name type="primary">PCBD2</name>
</gene>
<dbReference type="EC" id="4.2.1.96"/>
<dbReference type="EMBL" id="CR860114">
    <property type="protein sequence ID" value="CAH92259.1"/>
    <property type="status" value="ALT_INIT"/>
    <property type="molecule type" value="mRNA"/>
</dbReference>
<dbReference type="SMR" id="Q5R7K1"/>
<dbReference type="STRING" id="9601.ENSPPYP00000017661"/>
<dbReference type="eggNOG" id="KOG4073">
    <property type="taxonomic scope" value="Eukaryota"/>
</dbReference>
<dbReference type="HOGENOM" id="CLU_081974_3_1_1"/>
<dbReference type="InParanoid" id="Q5R7K1"/>
<dbReference type="Proteomes" id="UP000001595">
    <property type="component" value="Unplaced"/>
</dbReference>
<dbReference type="GO" id="GO:0008124">
    <property type="term" value="F:4-alpha-hydroxytetrahydrobiopterin dehydratase activity"/>
    <property type="evidence" value="ECO:0007669"/>
    <property type="project" value="UniProtKB-EC"/>
</dbReference>
<dbReference type="GO" id="GO:0006729">
    <property type="term" value="P:tetrahydrobiopterin biosynthetic process"/>
    <property type="evidence" value="ECO:0007669"/>
    <property type="project" value="UniProtKB-KW"/>
</dbReference>
<dbReference type="CDD" id="cd00914">
    <property type="entry name" value="PCD_DCoH_subfamily_b"/>
    <property type="match status" value="1"/>
</dbReference>
<dbReference type="FunFam" id="3.30.1360.20:FF:000001">
    <property type="entry name" value="Pterin-4-alpha-carbinolamine dehydratase 2"/>
    <property type="match status" value="1"/>
</dbReference>
<dbReference type="Gene3D" id="3.30.1360.20">
    <property type="entry name" value="Transcriptional coactivator/pterin dehydratase"/>
    <property type="match status" value="1"/>
</dbReference>
<dbReference type="HAMAP" id="MF_00434">
    <property type="entry name" value="Pterin_4_alpha"/>
    <property type="match status" value="1"/>
</dbReference>
<dbReference type="InterPro" id="IPR036428">
    <property type="entry name" value="PCD_sf"/>
</dbReference>
<dbReference type="InterPro" id="IPR001533">
    <property type="entry name" value="Pterin_deHydtase"/>
</dbReference>
<dbReference type="NCBIfam" id="NF002018">
    <property type="entry name" value="PRK00823.1-3"/>
    <property type="match status" value="1"/>
</dbReference>
<dbReference type="PANTHER" id="PTHR12599">
    <property type="entry name" value="PTERIN-4-ALPHA-CARBINOLAMINE DEHYDRATASE"/>
    <property type="match status" value="1"/>
</dbReference>
<dbReference type="PANTHER" id="PTHR12599:SF15">
    <property type="entry name" value="PTERIN-4-ALPHA-CARBINOLAMINE DEHYDRATASE 2"/>
    <property type="match status" value="1"/>
</dbReference>
<dbReference type="Pfam" id="PF01329">
    <property type="entry name" value="Pterin_4a"/>
    <property type="match status" value="1"/>
</dbReference>
<dbReference type="SUPFAM" id="SSF55248">
    <property type="entry name" value="PCD-like"/>
    <property type="match status" value="1"/>
</dbReference>
<sequence>LLAALRGQSLGLAAMSSGTHRLTPEERNQAILDLKAAGWSELSERDAIYKEFSFRNFNQAFGFMSRVALQAEKMNHHPEWFNVYNKVQITLTSHDCGELTKKDVKLAQFIEKAAASV</sequence>
<protein>
    <recommendedName>
        <fullName>Pterin-4-alpha-carbinolamine dehydratase 2</fullName>
        <shortName>PHS 2</shortName>
        <ecNumber>4.2.1.96</ecNumber>
    </recommendedName>
    <alternativeName>
        <fullName>4-alpha-hydroxy-tetrahydropterin dehydratase 2</fullName>
    </alternativeName>
</protein>
<evidence type="ECO:0000250" key="1"/>
<evidence type="ECO:0000250" key="2">
    <source>
        <dbReference type="UniProtKB" id="Q9CZL5"/>
    </source>
</evidence>
<evidence type="ECO:0000305" key="3"/>
<accession>Q5R7K1</accession>
<name>PHS2_PONAB</name>
<keyword id="KW-0007">Acetylation</keyword>
<keyword id="KW-0456">Lyase</keyword>
<keyword id="KW-1185">Reference proteome</keyword>
<keyword id="KW-0783">Tetrahydrobiopterin biosynthesis</keyword>